<comment type="function">
    <text evidence="1">Interleukin-16 stimulates a migratory response in CD4+ lymphocytes, monocytes, and eosinophils. Primes CD4+ T-cells for IL-2 and IL-15 responsiveness. Also induces T-lymphocyte expression of interleukin 2 receptor. Ligand for CD4 (By similarity).</text>
</comment>
<comment type="function">
    <text evidence="1">Pro-interleukin-16 is involved in cell cycle progression in T-cells. Appears to be involved in transcriptional regulation of SKP2 and is probably part of a transcriptional repression complex on the core promoter of the SKP2 gene. May act as a scaffold for GABPB1 (the DNA-binding subunit the GABP transcription factor complex) and HDAC3 thus maintaining transcriptional repression and blocking cell cycle progression in resting T-cells (By similarity).</text>
</comment>
<comment type="subunit">
    <text evidence="1 5">Homotetramer (Probable). Pro-interleukin-16 interacts (via PDZ 2 domain) with PPP1R12A, PPP1R12B and PPP1R12C. Pro-interleukin-16 interacts with GRIN2A. Pro-interleukin-16 interacts with GABPB1. Pro-interleukin-16 interacts (via PDZ 3 domain) with HDAC3 (By similarity).</text>
</comment>
<comment type="subcellular location">
    <molecule>Interleukin-16</molecule>
    <subcellularLocation>
        <location evidence="1">Secreted</location>
    </subcellularLocation>
</comment>
<comment type="subcellular location">
    <molecule>Pro-interleukin-16</molecule>
    <subcellularLocation>
        <location>Cytoplasm</location>
    </subcellularLocation>
    <subcellularLocation>
        <location evidence="1">Nucleus</location>
    </subcellularLocation>
</comment>
<proteinExistence type="evidence at transcript level"/>
<reference key="1">
    <citation type="journal article" date="1998" name="Immunogenetics">
        <title>Molecular cloning and sequence analysis of interleukin 16 from nonhuman primates and from the mouse.</title>
        <authorList>
            <person name="Bannert N."/>
            <person name="Adler H.S."/>
            <person name="Werner A."/>
            <person name="Baier M."/>
            <person name="Kurth R."/>
        </authorList>
    </citation>
    <scope>NUCLEOTIDE SEQUENCE [MRNA]</scope>
</reference>
<keyword id="KW-0145">Chemotaxis</keyword>
<keyword id="KW-0202">Cytokine</keyword>
<keyword id="KW-0963">Cytoplasm</keyword>
<keyword id="KW-0539">Nucleus</keyword>
<keyword id="KW-0597">Phosphoprotein</keyword>
<keyword id="KW-0677">Repeat</keyword>
<keyword id="KW-0964">Secreted</keyword>
<keyword id="KW-0804">Transcription</keyword>
<keyword id="KW-0805">Transcription regulation</keyword>
<sequence length="631" mass="66640">MDYSFDTTAEDPWVRISDCIKNLFSPIMSENPGHMPLQPNASLSEEDGTQGHPDGNPPKLDTANGTPKVYKSADRSTVKKGPPVAPKPAWFRQSLKGLRNRASDPRGLPDPALSTQPAPASREHLGPHIRASSSSSSIKQRISSFETFGSSQLPDKGAQRLSLQPSSGEAAKPLGKHEGGRFSGLLGRGAAPTLVPQQPEQVLPSGSPAATEARDPGVSESPPPGLQPNQKTLPTGSDPLLRLLSTQTEKSQGPVLKMPSQRARSFPLTRSQSCETKLLDEKTSKLYSISSQVSSAVMKSLLCLPSSLSCAQTPCIPKEGASPTSSSNEDSAANGSAETSASDTGFSLNLSELREYTEGLTEAKEDDDGDHSSHQSGQSVISLLSSEELKQLIEEVKVLDEATLKQLDSIHVTILHKEEGAGLGFSLAGGADLENKVITVHKVFPNGLASQEGTIQKGNEVLSINGKSLKGTTHNDALAILRQAREPRQAVIVTRKLTAESMPDLNSTTDSAASASAASDVSVESSAEATVYTVTLEKMSAGLGFSLEGGKGSLHGDKPLTINRIFKGAASEQSETIQPGDEILQLAGTAMQGLTRFEAWNIIKALPDGPVTIVIRRKSLQPKETTAAADS</sequence>
<gene>
    <name type="primary">IL16</name>
</gene>
<dbReference type="EMBL" id="AF017106">
    <property type="protein sequence ID" value="AAC16034.1"/>
    <property type="molecule type" value="mRNA"/>
</dbReference>
<dbReference type="PIR" id="S62401">
    <property type="entry name" value="S62401"/>
</dbReference>
<dbReference type="SMR" id="O62674"/>
<dbReference type="GO" id="GO:0005737">
    <property type="term" value="C:cytoplasm"/>
    <property type="evidence" value="ECO:0007669"/>
    <property type="project" value="UniProtKB-SubCell"/>
</dbReference>
<dbReference type="GO" id="GO:0005615">
    <property type="term" value="C:extracellular space"/>
    <property type="evidence" value="ECO:0007669"/>
    <property type="project" value="UniProtKB-KW"/>
</dbReference>
<dbReference type="GO" id="GO:0005634">
    <property type="term" value="C:nucleus"/>
    <property type="evidence" value="ECO:0007669"/>
    <property type="project" value="UniProtKB-SubCell"/>
</dbReference>
<dbReference type="GO" id="GO:0042609">
    <property type="term" value="F:CD4 receptor binding"/>
    <property type="evidence" value="ECO:0007669"/>
    <property type="project" value="TreeGrafter"/>
</dbReference>
<dbReference type="GO" id="GO:0005125">
    <property type="term" value="F:cytokine activity"/>
    <property type="evidence" value="ECO:0007669"/>
    <property type="project" value="UniProtKB-KW"/>
</dbReference>
<dbReference type="GO" id="GO:0050930">
    <property type="term" value="P:induction of positive chemotaxis"/>
    <property type="evidence" value="ECO:0007669"/>
    <property type="project" value="InterPro"/>
</dbReference>
<dbReference type="GO" id="GO:0030595">
    <property type="term" value="P:leukocyte chemotaxis"/>
    <property type="evidence" value="ECO:0007669"/>
    <property type="project" value="TreeGrafter"/>
</dbReference>
<dbReference type="CDD" id="cd06762">
    <property type="entry name" value="PDZ6_PDZD2-PDZ3_hPro-IL-16-like"/>
    <property type="match status" value="1"/>
</dbReference>
<dbReference type="CDD" id="cd06763">
    <property type="entry name" value="PDZ7_PDZD2-PDZ4_hPro-IL-16-like"/>
    <property type="match status" value="1"/>
</dbReference>
<dbReference type="FunFam" id="2.30.42.10:FF:000122">
    <property type="entry name" value="Pro-interleukin-16"/>
    <property type="match status" value="1"/>
</dbReference>
<dbReference type="FunFam" id="2.30.42.10:FF:000147">
    <property type="entry name" value="Pro-interleukin-16"/>
    <property type="match status" value="1"/>
</dbReference>
<dbReference type="Gene3D" id="2.30.42.10">
    <property type="match status" value="2"/>
</dbReference>
<dbReference type="InterPro" id="IPR020450">
    <property type="entry name" value="IL-16"/>
</dbReference>
<dbReference type="InterPro" id="IPR055287">
    <property type="entry name" value="IL-16-like"/>
</dbReference>
<dbReference type="InterPro" id="IPR001478">
    <property type="entry name" value="PDZ"/>
</dbReference>
<dbReference type="InterPro" id="IPR036034">
    <property type="entry name" value="PDZ_sf"/>
</dbReference>
<dbReference type="PANTHER" id="PTHR48484">
    <property type="entry name" value="PRO-INTERLEUKIN-16"/>
    <property type="match status" value="1"/>
</dbReference>
<dbReference type="PANTHER" id="PTHR48484:SF2">
    <property type="entry name" value="PRO-INTERLEUKIN-16"/>
    <property type="match status" value="1"/>
</dbReference>
<dbReference type="Pfam" id="PF00595">
    <property type="entry name" value="PDZ"/>
    <property type="match status" value="2"/>
</dbReference>
<dbReference type="PRINTS" id="PR01931">
    <property type="entry name" value="INTRLEUKIN16"/>
</dbReference>
<dbReference type="SMART" id="SM00228">
    <property type="entry name" value="PDZ"/>
    <property type="match status" value="2"/>
</dbReference>
<dbReference type="SUPFAM" id="SSF50156">
    <property type="entry name" value="PDZ domain-like"/>
    <property type="match status" value="2"/>
</dbReference>
<dbReference type="PROSITE" id="PS50106">
    <property type="entry name" value="PDZ"/>
    <property type="match status" value="2"/>
</dbReference>
<accession>O62674</accession>
<organism>
    <name type="scientific">Chlorocebus aethiops</name>
    <name type="common">Green monkey</name>
    <name type="synonym">Cercopithecus aethiops</name>
    <dbReference type="NCBI Taxonomy" id="9534"/>
    <lineage>
        <taxon>Eukaryota</taxon>
        <taxon>Metazoa</taxon>
        <taxon>Chordata</taxon>
        <taxon>Craniata</taxon>
        <taxon>Vertebrata</taxon>
        <taxon>Euteleostomi</taxon>
        <taxon>Mammalia</taxon>
        <taxon>Eutheria</taxon>
        <taxon>Euarchontoglires</taxon>
        <taxon>Primates</taxon>
        <taxon>Haplorrhini</taxon>
        <taxon>Catarrhini</taxon>
        <taxon>Cercopithecidae</taxon>
        <taxon>Cercopithecinae</taxon>
        <taxon>Chlorocebus</taxon>
    </lineage>
</organism>
<protein>
    <recommendedName>
        <fullName>Pro-interleukin-16</fullName>
    </recommendedName>
    <component>
        <recommendedName>
            <fullName>Interleukin-16</fullName>
            <shortName>IL-16</shortName>
        </recommendedName>
        <alternativeName>
            <fullName>Lymphocyte chemoattractant factor</fullName>
            <shortName>LCF</shortName>
        </alternativeName>
    </component>
</protein>
<feature type="chain" id="PRO_0000377542" description="Pro-interleukin-16">
    <location>
        <begin position="1"/>
        <end position="631"/>
    </location>
</feature>
<feature type="chain" id="PRO_0000015410" description="Interleukin-16" evidence="1">
    <location>
        <begin position="511"/>
        <end position="631"/>
    </location>
</feature>
<feature type="domain" description="PDZ 1" evidence="3">
    <location>
        <begin position="411"/>
        <end position="496"/>
    </location>
</feature>
<feature type="domain" description="PDZ 2" evidence="3">
    <location>
        <begin position="533"/>
        <end position="618"/>
    </location>
</feature>
<feature type="region of interest" description="Disordered" evidence="4">
    <location>
        <begin position="30"/>
        <end position="269"/>
    </location>
</feature>
<feature type="region of interest" description="Disordered" evidence="4">
    <location>
        <begin position="317"/>
        <end position="344"/>
    </location>
</feature>
<feature type="region of interest" description="Interaction with PPP1R12A, PPP1R12B and PPP1R12C" evidence="1">
    <location>
        <begin position="405"/>
        <end position="501"/>
    </location>
</feature>
<feature type="compositionally biased region" description="Low complexity" evidence="4">
    <location>
        <begin position="132"/>
        <end position="144"/>
    </location>
</feature>
<feature type="compositionally biased region" description="Polar residues" evidence="4">
    <location>
        <begin position="322"/>
        <end position="344"/>
    </location>
</feature>
<feature type="modified residue" description="Phosphoserine" evidence="2">
    <location>
        <position position="221"/>
    </location>
</feature>
<name>IL16_CHLAE</name>
<evidence type="ECO:0000250" key="1"/>
<evidence type="ECO:0000250" key="2">
    <source>
        <dbReference type="UniProtKB" id="Q14005"/>
    </source>
</evidence>
<evidence type="ECO:0000255" key="3">
    <source>
        <dbReference type="PROSITE-ProRule" id="PRU00143"/>
    </source>
</evidence>
<evidence type="ECO:0000256" key="4">
    <source>
        <dbReference type="SAM" id="MobiDB-lite"/>
    </source>
</evidence>
<evidence type="ECO:0000305" key="5"/>